<feature type="chain" id="PRO_1000142641" description="Large ribosomal subunit protein uL18">
    <location>
        <begin position="1"/>
        <end position="123"/>
    </location>
</feature>
<organism>
    <name type="scientific">Chlamydia trachomatis serovar L2b (strain UCH-1/proctitis)</name>
    <dbReference type="NCBI Taxonomy" id="471473"/>
    <lineage>
        <taxon>Bacteria</taxon>
        <taxon>Pseudomonadati</taxon>
        <taxon>Chlamydiota</taxon>
        <taxon>Chlamydiia</taxon>
        <taxon>Chlamydiales</taxon>
        <taxon>Chlamydiaceae</taxon>
        <taxon>Chlamydia/Chlamydophila group</taxon>
        <taxon>Chlamydia</taxon>
    </lineage>
</organism>
<proteinExistence type="inferred from homology"/>
<evidence type="ECO:0000255" key="1">
    <source>
        <dbReference type="HAMAP-Rule" id="MF_01337"/>
    </source>
</evidence>
<evidence type="ECO:0000305" key="2"/>
<dbReference type="EMBL" id="AM884177">
    <property type="protein sequence ID" value="CAP07167.1"/>
    <property type="molecule type" value="Genomic_DNA"/>
</dbReference>
<dbReference type="RefSeq" id="WP_009873868.1">
    <property type="nucleotide sequence ID" value="NC_010280.2"/>
</dbReference>
<dbReference type="SMR" id="B0BCF2"/>
<dbReference type="KEGG" id="ctl:CTLon_0770"/>
<dbReference type="HOGENOM" id="CLU_098841_0_1_0"/>
<dbReference type="Proteomes" id="UP001154401">
    <property type="component" value="Chromosome"/>
</dbReference>
<dbReference type="GO" id="GO:0022625">
    <property type="term" value="C:cytosolic large ribosomal subunit"/>
    <property type="evidence" value="ECO:0007669"/>
    <property type="project" value="TreeGrafter"/>
</dbReference>
<dbReference type="GO" id="GO:0008097">
    <property type="term" value="F:5S rRNA binding"/>
    <property type="evidence" value="ECO:0007669"/>
    <property type="project" value="TreeGrafter"/>
</dbReference>
<dbReference type="GO" id="GO:0003735">
    <property type="term" value="F:structural constituent of ribosome"/>
    <property type="evidence" value="ECO:0007669"/>
    <property type="project" value="InterPro"/>
</dbReference>
<dbReference type="GO" id="GO:0006412">
    <property type="term" value="P:translation"/>
    <property type="evidence" value="ECO:0007669"/>
    <property type="project" value="UniProtKB-UniRule"/>
</dbReference>
<dbReference type="CDD" id="cd00432">
    <property type="entry name" value="Ribosomal_L18_L5e"/>
    <property type="match status" value="1"/>
</dbReference>
<dbReference type="FunFam" id="3.30.420.100:FF:000001">
    <property type="entry name" value="50S ribosomal protein L18"/>
    <property type="match status" value="1"/>
</dbReference>
<dbReference type="Gene3D" id="3.30.420.100">
    <property type="match status" value="1"/>
</dbReference>
<dbReference type="HAMAP" id="MF_01337_B">
    <property type="entry name" value="Ribosomal_uL18_B"/>
    <property type="match status" value="1"/>
</dbReference>
<dbReference type="InterPro" id="IPR004389">
    <property type="entry name" value="Ribosomal_uL18_bac-type"/>
</dbReference>
<dbReference type="InterPro" id="IPR005484">
    <property type="entry name" value="Ribosomal_uL18_bac/euk"/>
</dbReference>
<dbReference type="NCBIfam" id="TIGR00060">
    <property type="entry name" value="L18_bact"/>
    <property type="match status" value="1"/>
</dbReference>
<dbReference type="PANTHER" id="PTHR12899">
    <property type="entry name" value="39S RIBOSOMAL PROTEIN L18, MITOCHONDRIAL"/>
    <property type="match status" value="1"/>
</dbReference>
<dbReference type="PANTHER" id="PTHR12899:SF3">
    <property type="entry name" value="LARGE RIBOSOMAL SUBUNIT PROTEIN UL18M"/>
    <property type="match status" value="1"/>
</dbReference>
<dbReference type="Pfam" id="PF00861">
    <property type="entry name" value="Ribosomal_L18p"/>
    <property type="match status" value="1"/>
</dbReference>
<dbReference type="SUPFAM" id="SSF53137">
    <property type="entry name" value="Translational machinery components"/>
    <property type="match status" value="1"/>
</dbReference>
<name>RL18_CHLTB</name>
<sequence>MESSLYKKTSGKARRALRVRKALKGCSLKPRLSVVKTNKHVYVQLIDDVEGKTLAFISTLAKVAKTSGLTRKNQDNAKALGIKIAELGKGLQVDRVVFDRGAHKYHGVVAMVADGAREGGLQF</sequence>
<accession>B0BCF2</accession>
<keyword id="KW-0687">Ribonucleoprotein</keyword>
<keyword id="KW-0689">Ribosomal protein</keyword>
<keyword id="KW-0694">RNA-binding</keyword>
<keyword id="KW-0699">rRNA-binding</keyword>
<protein>
    <recommendedName>
        <fullName evidence="1">Large ribosomal subunit protein uL18</fullName>
    </recommendedName>
    <alternativeName>
        <fullName evidence="2">50S ribosomal protein L18</fullName>
    </alternativeName>
</protein>
<gene>
    <name evidence="1" type="primary">rplR</name>
    <name type="ordered locus">CTLon_0770</name>
</gene>
<comment type="function">
    <text evidence="1">This is one of the proteins that bind and probably mediate the attachment of the 5S RNA into the large ribosomal subunit, where it forms part of the central protuberance.</text>
</comment>
<comment type="subunit">
    <text evidence="1">Part of the 50S ribosomal subunit; part of the 5S rRNA/L5/L18/L25 subcomplex. Contacts the 5S and 23S rRNAs.</text>
</comment>
<comment type="similarity">
    <text evidence="1">Belongs to the universal ribosomal protein uL18 family.</text>
</comment>
<reference key="1">
    <citation type="journal article" date="2008" name="Genome Res.">
        <title>Chlamydia trachomatis: genome sequence analysis of lymphogranuloma venereum isolates.</title>
        <authorList>
            <person name="Thomson N.R."/>
            <person name="Holden M.T.G."/>
            <person name="Carder C."/>
            <person name="Lennard N."/>
            <person name="Lockey S.J."/>
            <person name="Marsh P."/>
            <person name="Skipp P."/>
            <person name="O'Connor C.D."/>
            <person name="Goodhead I."/>
            <person name="Norbertzcak H."/>
            <person name="Harris B."/>
            <person name="Ormond D."/>
            <person name="Rance R."/>
            <person name="Quail M.A."/>
            <person name="Parkhill J."/>
            <person name="Stephens R.S."/>
            <person name="Clarke I.N."/>
        </authorList>
    </citation>
    <scope>NUCLEOTIDE SEQUENCE [LARGE SCALE GENOMIC DNA]</scope>
    <source>
        <strain>UCH-1/proctitis</strain>
    </source>
</reference>